<dbReference type="EC" id="5.4.2.7" evidence="1"/>
<dbReference type="EMBL" id="CP001144">
    <property type="protein sequence ID" value="ACH73691.1"/>
    <property type="molecule type" value="Genomic_DNA"/>
</dbReference>
<dbReference type="RefSeq" id="WP_000816456.1">
    <property type="nucleotide sequence ID" value="NC_011205.1"/>
</dbReference>
<dbReference type="SMR" id="B5FTC7"/>
<dbReference type="KEGG" id="sed:SeD_A4984"/>
<dbReference type="HOGENOM" id="CLU_053861_0_0_6"/>
<dbReference type="UniPathway" id="UPA00002">
    <property type="reaction ID" value="UER00467"/>
</dbReference>
<dbReference type="Proteomes" id="UP000008322">
    <property type="component" value="Chromosome"/>
</dbReference>
<dbReference type="GO" id="GO:0005829">
    <property type="term" value="C:cytosol"/>
    <property type="evidence" value="ECO:0007669"/>
    <property type="project" value="TreeGrafter"/>
</dbReference>
<dbReference type="GO" id="GO:0000287">
    <property type="term" value="F:magnesium ion binding"/>
    <property type="evidence" value="ECO:0007669"/>
    <property type="project" value="InterPro"/>
</dbReference>
<dbReference type="GO" id="GO:0030145">
    <property type="term" value="F:manganese ion binding"/>
    <property type="evidence" value="ECO:0007669"/>
    <property type="project" value="UniProtKB-UniRule"/>
</dbReference>
<dbReference type="GO" id="GO:0008973">
    <property type="term" value="F:phosphopentomutase activity"/>
    <property type="evidence" value="ECO:0007669"/>
    <property type="project" value="UniProtKB-UniRule"/>
</dbReference>
<dbReference type="GO" id="GO:0006018">
    <property type="term" value="P:2-deoxyribose 1-phosphate catabolic process"/>
    <property type="evidence" value="ECO:0007669"/>
    <property type="project" value="UniProtKB-UniRule"/>
</dbReference>
<dbReference type="GO" id="GO:0006015">
    <property type="term" value="P:5-phosphoribose 1-diphosphate biosynthetic process"/>
    <property type="evidence" value="ECO:0007669"/>
    <property type="project" value="UniProtKB-UniPathway"/>
</dbReference>
<dbReference type="GO" id="GO:0043094">
    <property type="term" value="P:metabolic compound salvage"/>
    <property type="evidence" value="ECO:0007669"/>
    <property type="project" value="InterPro"/>
</dbReference>
<dbReference type="GO" id="GO:0009117">
    <property type="term" value="P:nucleotide metabolic process"/>
    <property type="evidence" value="ECO:0007669"/>
    <property type="project" value="InterPro"/>
</dbReference>
<dbReference type="CDD" id="cd16009">
    <property type="entry name" value="PPM"/>
    <property type="match status" value="1"/>
</dbReference>
<dbReference type="FunFam" id="3.30.70.1250:FF:000001">
    <property type="entry name" value="Phosphopentomutase"/>
    <property type="match status" value="1"/>
</dbReference>
<dbReference type="Gene3D" id="3.40.720.10">
    <property type="entry name" value="Alkaline Phosphatase, subunit A"/>
    <property type="match status" value="1"/>
</dbReference>
<dbReference type="Gene3D" id="3.30.70.1250">
    <property type="entry name" value="Phosphopentomutase"/>
    <property type="match status" value="1"/>
</dbReference>
<dbReference type="HAMAP" id="MF_00740">
    <property type="entry name" value="Phosphopentomut"/>
    <property type="match status" value="1"/>
</dbReference>
<dbReference type="InterPro" id="IPR017850">
    <property type="entry name" value="Alkaline_phosphatase_core_sf"/>
</dbReference>
<dbReference type="InterPro" id="IPR010045">
    <property type="entry name" value="DeoB"/>
</dbReference>
<dbReference type="InterPro" id="IPR006124">
    <property type="entry name" value="Metalloenzyme"/>
</dbReference>
<dbReference type="InterPro" id="IPR024052">
    <property type="entry name" value="Phosphopentomutase_DeoB_cap_sf"/>
</dbReference>
<dbReference type="NCBIfam" id="TIGR01696">
    <property type="entry name" value="deoB"/>
    <property type="match status" value="1"/>
</dbReference>
<dbReference type="NCBIfam" id="NF003766">
    <property type="entry name" value="PRK05362.1"/>
    <property type="match status" value="1"/>
</dbReference>
<dbReference type="PANTHER" id="PTHR21110">
    <property type="entry name" value="PHOSPHOPENTOMUTASE"/>
    <property type="match status" value="1"/>
</dbReference>
<dbReference type="PANTHER" id="PTHR21110:SF0">
    <property type="entry name" value="PHOSPHOPENTOMUTASE"/>
    <property type="match status" value="1"/>
</dbReference>
<dbReference type="Pfam" id="PF01676">
    <property type="entry name" value="Metalloenzyme"/>
    <property type="match status" value="1"/>
</dbReference>
<dbReference type="PIRSF" id="PIRSF001491">
    <property type="entry name" value="Ppentomutase"/>
    <property type="match status" value="1"/>
</dbReference>
<dbReference type="SUPFAM" id="SSF53649">
    <property type="entry name" value="Alkaline phosphatase-like"/>
    <property type="match status" value="1"/>
</dbReference>
<dbReference type="SUPFAM" id="SSF143856">
    <property type="entry name" value="DeoB insert domain-like"/>
    <property type="match status" value="1"/>
</dbReference>
<protein>
    <recommendedName>
        <fullName evidence="1">Phosphopentomutase</fullName>
        <ecNumber evidence="1">5.4.2.7</ecNumber>
    </recommendedName>
    <alternativeName>
        <fullName evidence="1">Phosphodeoxyribomutase</fullName>
    </alternativeName>
</protein>
<proteinExistence type="inferred from homology"/>
<reference key="1">
    <citation type="journal article" date="2011" name="J. Bacteriol.">
        <title>Comparative genomics of 28 Salmonella enterica isolates: evidence for CRISPR-mediated adaptive sublineage evolution.</title>
        <authorList>
            <person name="Fricke W.F."/>
            <person name="Mammel M.K."/>
            <person name="McDermott P.F."/>
            <person name="Tartera C."/>
            <person name="White D.G."/>
            <person name="Leclerc J.E."/>
            <person name="Ravel J."/>
            <person name="Cebula T.A."/>
        </authorList>
    </citation>
    <scope>NUCLEOTIDE SEQUENCE [LARGE SCALE GENOMIC DNA]</scope>
    <source>
        <strain>CT_02021853</strain>
    </source>
</reference>
<gene>
    <name evidence="1" type="primary">deoB</name>
    <name type="ordered locus">SeD_A4984</name>
</gene>
<comment type="function">
    <text evidence="1">Isomerase that catalyzes the conversion of deoxy-ribose 1-phosphate (dRib-1-P) and ribose 1-phosphate (Rib-1-P) to deoxy-ribose 5-phosphate (dRib-5-P) and ribose 5-phosphate (Rib-5-P), respectively.</text>
</comment>
<comment type="catalytic activity">
    <reaction evidence="1">
        <text>2-deoxy-alpha-D-ribose 1-phosphate = 2-deoxy-D-ribose 5-phosphate</text>
        <dbReference type="Rhea" id="RHEA:27658"/>
        <dbReference type="ChEBI" id="CHEBI:57259"/>
        <dbReference type="ChEBI" id="CHEBI:62877"/>
        <dbReference type="EC" id="5.4.2.7"/>
    </reaction>
</comment>
<comment type="catalytic activity">
    <reaction evidence="1">
        <text>alpha-D-ribose 1-phosphate = D-ribose 5-phosphate</text>
        <dbReference type="Rhea" id="RHEA:18793"/>
        <dbReference type="ChEBI" id="CHEBI:57720"/>
        <dbReference type="ChEBI" id="CHEBI:78346"/>
        <dbReference type="EC" id="5.4.2.7"/>
    </reaction>
</comment>
<comment type="cofactor">
    <cofactor evidence="1">
        <name>Mn(2+)</name>
        <dbReference type="ChEBI" id="CHEBI:29035"/>
    </cofactor>
    <text evidence="1">Binds 2 manganese ions.</text>
</comment>
<comment type="pathway">
    <text evidence="1">Carbohydrate degradation; 2-deoxy-D-ribose 1-phosphate degradation; D-glyceraldehyde 3-phosphate and acetaldehyde from 2-deoxy-alpha-D-ribose 1-phosphate: step 1/2.</text>
</comment>
<comment type="subcellular location">
    <subcellularLocation>
        <location evidence="1">Cytoplasm</location>
    </subcellularLocation>
</comment>
<comment type="similarity">
    <text evidence="1">Belongs to the phosphopentomutase family.</text>
</comment>
<feature type="chain" id="PRO_1000133093" description="Phosphopentomutase">
    <location>
        <begin position="1"/>
        <end position="407"/>
    </location>
</feature>
<feature type="binding site" evidence="1">
    <location>
        <position position="10"/>
    </location>
    <ligand>
        <name>Mn(2+)</name>
        <dbReference type="ChEBI" id="CHEBI:29035"/>
        <label>1</label>
    </ligand>
</feature>
<feature type="binding site" evidence="1">
    <location>
        <position position="306"/>
    </location>
    <ligand>
        <name>Mn(2+)</name>
        <dbReference type="ChEBI" id="CHEBI:29035"/>
        <label>2</label>
    </ligand>
</feature>
<feature type="binding site" evidence="1">
    <location>
        <position position="311"/>
    </location>
    <ligand>
        <name>Mn(2+)</name>
        <dbReference type="ChEBI" id="CHEBI:29035"/>
        <label>2</label>
    </ligand>
</feature>
<feature type="binding site" evidence="1">
    <location>
        <position position="347"/>
    </location>
    <ligand>
        <name>Mn(2+)</name>
        <dbReference type="ChEBI" id="CHEBI:29035"/>
        <label>1</label>
    </ligand>
</feature>
<feature type="binding site" evidence="1">
    <location>
        <position position="348"/>
    </location>
    <ligand>
        <name>Mn(2+)</name>
        <dbReference type="ChEBI" id="CHEBI:29035"/>
        <label>1</label>
    </ligand>
</feature>
<feature type="binding site" evidence="1">
    <location>
        <position position="359"/>
    </location>
    <ligand>
        <name>Mn(2+)</name>
        <dbReference type="ChEBI" id="CHEBI:29035"/>
        <label>2</label>
    </ligand>
</feature>
<keyword id="KW-0963">Cytoplasm</keyword>
<keyword id="KW-0413">Isomerase</keyword>
<keyword id="KW-0464">Manganese</keyword>
<keyword id="KW-0479">Metal-binding</keyword>
<evidence type="ECO:0000255" key="1">
    <source>
        <dbReference type="HAMAP-Rule" id="MF_00740"/>
    </source>
</evidence>
<name>DEOB_SALDC</name>
<accession>B5FTC7</accession>
<sequence>MKRAFIMVLDSFGIGATEDADRFGDVGSDTLGHIAEACAKGEADNGRKGPLNLPNLTRLGLVKAHEGSTGKIAAGMDGNADVIGAYAWAHELSSGKDTPSGHWEIAGVPVLFDWGYFSDHENSFPQELLDKLVKRANLPGYLGNCHSSGTVILDQLGEEHMKTGKPIFYTSADSVFQIACHEETFGLDKLYELCEIAREELTVGGYNIGRVIARPFIGDKAGNFQRTGNRHDLAVEPPAPTVLQKLVDEKQGHVVSVGKIADIYANCGITKKVKATGLDALFDATLKEMKEAGDKTIVFTNFVDFDSSWGHRRDIAGYAAGLELFDRRLPELMELVGEDDILILTADHGCDPSWTGTDHTREHIPVLIYGPKVKPGSLGHRETFADIGQTLATYFGTSPMDYGKNML</sequence>
<organism>
    <name type="scientific">Salmonella dublin (strain CT_02021853)</name>
    <dbReference type="NCBI Taxonomy" id="439851"/>
    <lineage>
        <taxon>Bacteria</taxon>
        <taxon>Pseudomonadati</taxon>
        <taxon>Pseudomonadota</taxon>
        <taxon>Gammaproteobacteria</taxon>
        <taxon>Enterobacterales</taxon>
        <taxon>Enterobacteriaceae</taxon>
        <taxon>Salmonella</taxon>
    </lineage>
</organism>